<protein>
    <recommendedName>
        <fullName evidence="1">Glutamate-1-semialdehyde 2,1-aminomutase</fullName>
        <shortName evidence="1">GSA</shortName>
        <ecNumber evidence="1">5.4.3.8</ecNumber>
    </recommendedName>
    <alternativeName>
        <fullName evidence="1">Glutamate-1-semialdehyde aminotransferase</fullName>
        <shortName evidence="1">GSA-AT</shortName>
    </alternativeName>
</protein>
<organism>
    <name type="scientific">Pseudomonas savastanoi pv. phaseolicola (strain 1448A / Race 6)</name>
    <name type="common">Pseudomonas syringae pv. phaseolicola (strain 1448A / Race 6)</name>
    <dbReference type="NCBI Taxonomy" id="264730"/>
    <lineage>
        <taxon>Bacteria</taxon>
        <taxon>Pseudomonadati</taxon>
        <taxon>Pseudomonadota</taxon>
        <taxon>Gammaproteobacteria</taxon>
        <taxon>Pseudomonadales</taxon>
        <taxon>Pseudomonadaceae</taxon>
        <taxon>Pseudomonas</taxon>
    </lineage>
</organism>
<reference key="1">
    <citation type="journal article" date="2005" name="J. Bacteriol.">
        <title>Whole-genome sequence analysis of Pseudomonas syringae pv. phaseolicola 1448A reveals divergence among pathovars in genes involved in virulence and transposition.</title>
        <authorList>
            <person name="Joardar V."/>
            <person name="Lindeberg M."/>
            <person name="Jackson R.W."/>
            <person name="Selengut J."/>
            <person name="Dodson R."/>
            <person name="Brinkac L.M."/>
            <person name="Daugherty S.C."/>
            <person name="DeBoy R.T."/>
            <person name="Durkin A.S."/>
            <person name="Gwinn Giglio M."/>
            <person name="Madupu R."/>
            <person name="Nelson W.C."/>
            <person name="Rosovitz M.J."/>
            <person name="Sullivan S.A."/>
            <person name="Crabtree J."/>
            <person name="Creasy T."/>
            <person name="Davidsen T.M."/>
            <person name="Haft D.H."/>
            <person name="Zafar N."/>
            <person name="Zhou L."/>
            <person name="Halpin R."/>
            <person name="Holley T."/>
            <person name="Khouri H.M."/>
            <person name="Feldblyum T.V."/>
            <person name="White O."/>
            <person name="Fraser C.M."/>
            <person name="Chatterjee A.K."/>
            <person name="Cartinhour S."/>
            <person name="Schneider D."/>
            <person name="Mansfield J.W."/>
            <person name="Collmer A."/>
            <person name="Buell R."/>
        </authorList>
    </citation>
    <scope>NUCLEOTIDE SEQUENCE [LARGE SCALE GENOMIC DNA]</scope>
    <source>
        <strain>1448A / Race 6</strain>
    </source>
</reference>
<comment type="catalytic activity">
    <reaction evidence="1">
        <text>(S)-4-amino-5-oxopentanoate = 5-aminolevulinate</text>
        <dbReference type="Rhea" id="RHEA:14265"/>
        <dbReference type="ChEBI" id="CHEBI:57501"/>
        <dbReference type="ChEBI" id="CHEBI:356416"/>
        <dbReference type="EC" id="5.4.3.8"/>
    </reaction>
</comment>
<comment type="cofactor">
    <cofactor evidence="1">
        <name>pyridoxal 5'-phosphate</name>
        <dbReference type="ChEBI" id="CHEBI:597326"/>
    </cofactor>
</comment>
<comment type="pathway">
    <text evidence="1">Porphyrin-containing compound metabolism; protoporphyrin-IX biosynthesis; 5-aminolevulinate from L-glutamyl-tRNA(Glu): step 2/2.</text>
</comment>
<comment type="subunit">
    <text evidence="1">Homodimer.</text>
</comment>
<comment type="subcellular location">
    <subcellularLocation>
        <location evidence="1">Cytoplasm</location>
    </subcellularLocation>
</comment>
<comment type="similarity">
    <text evidence="1">Belongs to the class-III pyridoxal-phosphate-dependent aminotransferase family. HemL subfamily.</text>
</comment>
<dbReference type="EC" id="5.4.3.8" evidence="1"/>
<dbReference type="EMBL" id="CP000058">
    <property type="protein sequence ID" value="AAZ34622.1"/>
    <property type="molecule type" value="Genomic_DNA"/>
</dbReference>
<dbReference type="RefSeq" id="WP_002555312.1">
    <property type="nucleotide sequence ID" value="NC_005773.3"/>
</dbReference>
<dbReference type="SMR" id="Q48DP1"/>
<dbReference type="KEGG" id="psp:PSPPH_4384"/>
<dbReference type="eggNOG" id="COG0001">
    <property type="taxonomic scope" value="Bacteria"/>
</dbReference>
<dbReference type="HOGENOM" id="CLU_016922_1_5_6"/>
<dbReference type="UniPathway" id="UPA00251">
    <property type="reaction ID" value="UER00317"/>
</dbReference>
<dbReference type="Proteomes" id="UP000000551">
    <property type="component" value="Chromosome"/>
</dbReference>
<dbReference type="GO" id="GO:0005737">
    <property type="term" value="C:cytoplasm"/>
    <property type="evidence" value="ECO:0007669"/>
    <property type="project" value="UniProtKB-SubCell"/>
</dbReference>
<dbReference type="GO" id="GO:0042286">
    <property type="term" value="F:glutamate-1-semialdehyde 2,1-aminomutase activity"/>
    <property type="evidence" value="ECO:0007669"/>
    <property type="project" value="UniProtKB-UniRule"/>
</dbReference>
<dbReference type="GO" id="GO:0030170">
    <property type="term" value="F:pyridoxal phosphate binding"/>
    <property type="evidence" value="ECO:0007669"/>
    <property type="project" value="InterPro"/>
</dbReference>
<dbReference type="GO" id="GO:0008483">
    <property type="term" value="F:transaminase activity"/>
    <property type="evidence" value="ECO:0007669"/>
    <property type="project" value="InterPro"/>
</dbReference>
<dbReference type="GO" id="GO:0006782">
    <property type="term" value="P:protoporphyrinogen IX biosynthetic process"/>
    <property type="evidence" value="ECO:0007669"/>
    <property type="project" value="UniProtKB-UniRule"/>
</dbReference>
<dbReference type="CDD" id="cd00610">
    <property type="entry name" value="OAT_like"/>
    <property type="match status" value="1"/>
</dbReference>
<dbReference type="FunFam" id="3.40.640.10:FF:000021">
    <property type="entry name" value="Glutamate-1-semialdehyde 2,1-aminomutase"/>
    <property type="match status" value="1"/>
</dbReference>
<dbReference type="Gene3D" id="3.90.1150.10">
    <property type="entry name" value="Aspartate Aminotransferase, domain 1"/>
    <property type="match status" value="1"/>
</dbReference>
<dbReference type="Gene3D" id="3.40.640.10">
    <property type="entry name" value="Type I PLP-dependent aspartate aminotransferase-like (Major domain)"/>
    <property type="match status" value="1"/>
</dbReference>
<dbReference type="HAMAP" id="MF_00375">
    <property type="entry name" value="HemL_aminotrans_3"/>
    <property type="match status" value="1"/>
</dbReference>
<dbReference type="InterPro" id="IPR004639">
    <property type="entry name" value="4pyrrol_synth_GluAld_NH2Trfase"/>
</dbReference>
<dbReference type="InterPro" id="IPR005814">
    <property type="entry name" value="Aminotrans_3"/>
</dbReference>
<dbReference type="InterPro" id="IPR049704">
    <property type="entry name" value="Aminotrans_3_PPA_site"/>
</dbReference>
<dbReference type="InterPro" id="IPR015424">
    <property type="entry name" value="PyrdxlP-dep_Trfase"/>
</dbReference>
<dbReference type="InterPro" id="IPR015421">
    <property type="entry name" value="PyrdxlP-dep_Trfase_major"/>
</dbReference>
<dbReference type="InterPro" id="IPR015422">
    <property type="entry name" value="PyrdxlP-dep_Trfase_small"/>
</dbReference>
<dbReference type="NCBIfam" id="TIGR00713">
    <property type="entry name" value="hemL"/>
    <property type="match status" value="1"/>
</dbReference>
<dbReference type="NCBIfam" id="NF000818">
    <property type="entry name" value="PRK00062.1"/>
    <property type="match status" value="1"/>
</dbReference>
<dbReference type="PANTHER" id="PTHR43713">
    <property type="entry name" value="GLUTAMATE-1-SEMIALDEHYDE 2,1-AMINOMUTASE"/>
    <property type="match status" value="1"/>
</dbReference>
<dbReference type="PANTHER" id="PTHR43713:SF3">
    <property type="entry name" value="GLUTAMATE-1-SEMIALDEHYDE 2,1-AMINOMUTASE 1, CHLOROPLASTIC-RELATED"/>
    <property type="match status" value="1"/>
</dbReference>
<dbReference type="Pfam" id="PF00202">
    <property type="entry name" value="Aminotran_3"/>
    <property type="match status" value="1"/>
</dbReference>
<dbReference type="SUPFAM" id="SSF53383">
    <property type="entry name" value="PLP-dependent transferases"/>
    <property type="match status" value="1"/>
</dbReference>
<dbReference type="PROSITE" id="PS00600">
    <property type="entry name" value="AA_TRANSFER_CLASS_3"/>
    <property type="match status" value="1"/>
</dbReference>
<feature type="chain" id="PRO_0000243605" description="Glutamate-1-semialdehyde 2,1-aminomutase">
    <location>
        <begin position="1"/>
        <end position="427"/>
    </location>
</feature>
<feature type="modified residue" description="N6-(pyridoxal phosphate)lysine" evidence="1">
    <location>
        <position position="265"/>
    </location>
</feature>
<gene>
    <name evidence="1" type="primary">hemL</name>
    <name type="ordered locus">PSPPH_4384</name>
</gene>
<accession>Q48DP1</accession>
<name>GSA_PSE14</name>
<keyword id="KW-0963">Cytoplasm</keyword>
<keyword id="KW-0413">Isomerase</keyword>
<keyword id="KW-0627">Porphyrin biosynthesis</keyword>
<keyword id="KW-0663">Pyridoxal phosphate</keyword>
<evidence type="ECO:0000255" key="1">
    <source>
        <dbReference type="HAMAP-Rule" id="MF_00375"/>
    </source>
</evidence>
<sequence>MSRSETLFANAQKHIPGGVNSPVRAFKSVGGTPLFFKHAAGAYVTDEDDKRYVDYVGSWGPMILGHSHPEVLDAVRSQLEHGLSYGAPTAMETEMADLVCALVPSMEMVRMVSSGTEATMSAIRLARGFTGRDSIIKFEGCYHGHSDSLLVKAGSGALTLGVPSSPGVPAAFAKHTLTVPFNNLDAVRDLLAEVGQEVACIIVEPVAGNMNCVPPAPGYLQGLRDLCDEHGVVLIFDEVMTGFRVALGGAQAYYGVTPDLSTFGKIIGGGMPVGCFGGKREIMSHIAPLGPVYQAGTLSGNPLAMAAGLTTLRLISRPGFHDELSDYTRRLLEGLQQRADAAGIAFVTTQAGGMFGLYFSEAREIVTFEDVMTSDAERFKRFFHLMLEGGVYLAPSAFEAGFTSIAHGDAELKLTLDAAEKAFAALK</sequence>
<proteinExistence type="inferred from homology"/>